<dbReference type="EMBL" id="FM211192">
    <property type="protein sequence ID" value="CAR72056.1"/>
    <property type="molecule type" value="Genomic_DNA"/>
</dbReference>
<dbReference type="SMR" id="B8ZSH8"/>
<dbReference type="KEGG" id="mlb:MLBr01959"/>
<dbReference type="HOGENOM" id="CLU_072439_5_0_11"/>
<dbReference type="Proteomes" id="UP000006900">
    <property type="component" value="Chromosome"/>
</dbReference>
<dbReference type="GO" id="GO:1990904">
    <property type="term" value="C:ribonucleoprotein complex"/>
    <property type="evidence" value="ECO:0007669"/>
    <property type="project" value="UniProtKB-KW"/>
</dbReference>
<dbReference type="GO" id="GO:0005840">
    <property type="term" value="C:ribosome"/>
    <property type="evidence" value="ECO:0007669"/>
    <property type="project" value="UniProtKB-KW"/>
</dbReference>
<dbReference type="GO" id="GO:0019843">
    <property type="term" value="F:rRNA binding"/>
    <property type="evidence" value="ECO:0007669"/>
    <property type="project" value="UniProtKB-UniRule"/>
</dbReference>
<dbReference type="GO" id="GO:0003735">
    <property type="term" value="F:structural constituent of ribosome"/>
    <property type="evidence" value="ECO:0007669"/>
    <property type="project" value="InterPro"/>
</dbReference>
<dbReference type="GO" id="GO:0006412">
    <property type="term" value="P:translation"/>
    <property type="evidence" value="ECO:0007669"/>
    <property type="project" value="UniProtKB-UniRule"/>
</dbReference>
<dbReference type="FunFam" id="3.30.420.80:FF:000001">
    <property type="entry name" value="30S ribosomal protein S11"/>
    <property type="match status" value="1"/>
</dbReference>
<dbReference type="Gene3D" id="3.30.420.80">
    <property type="entry name" value="Ribosomal protein S11"/>
    <property type="match status" value="1"/>
</dbReference>
<dbReference type="HAMAP" id="MF_01310">
    <property type="entry name" value="Ribosomal_uS11"/>
    <property type="match status" value="1"/>
</dbReference>
<dbReference type="InterPro" id="IPR001971">
    <property type="entry name" value="Ribosomal_uS11"/>
</dbReference>
<dbReference type="InterPro" id="IPR019981">
    <property type="entry name" value="Ribosomal_uS11_bac-type"/>
</dbReference>
<dbReference type="InterPro" id="IPR018102">
    <property type="entry name" value="Ribosomal_uS11_CS"/>
</dbReference>
<dbReference type="InterPro" id="IPR036967">
    <property type="entry name" value="Ribosomal_uS11_sf"/>
</dbReference>
<dbReference type="NCBIfam" id="NF003698">
    <property type="entry name" value="PRK05309.1"/>
    <property type="match status" value="1"/>
</dbReference>
<dbReference type="NCBIfam" id="TIGR03632">
    <property type="entry name" value="uS11_bact"/>
    <property type="match status" value="1"/>
</dbReference>
<dbReference type="PANTHER" id="PTHR11759">
    <property type="entry name" value="40S RIBOSOMAL PROTEIN S14/30S RIBOSOMAL PROTEIN S11"/>
    <property type="match status" value="1"/>
</dbReference>
<dbReference type="Pfam" id="PF00411">
    <property type="entry name" value="Ribosomal_S11"/>
    <property type="match status" value="1"/>
</dbReference>
<dbReference type="PIRSF" id="PIRSF002131">
    <property type="entry name" value="Ribosomal_S11"/>
    <property type="match status" value="1"/>
</dbReference>
<dbReference type="SUPFAM" id="SSF53137">
    <property type="entry name" value="Translational machinery components"/>
    <property type="match status" value="1"/>
</dbReference>
<dbReference type="PROSITE" id="PS00054">
    <property type="entry name" value="RIBOSOMAL_S11"/>
    <property type="match status" value="1"/>
</dbReference>
<proteinExistence type="inferred from homology"/>
<comment type="function">
    <text evidence="1">Located on the platform of the 30S subunit, it bridges several disparate RNA helices of the 16S rRNA. Forms part of the Shine-Dalgarno cleft in the 70S ribosome.</text>
</comment>
<comment type="subunit">
    <text evidence="1">Part of the 30S ribosomal subunit. Interacts with proteins S7 and S18. Binds to IF-3.</text>
</comment>
<comment type="similarity">
    <text evidence="1">Belongs to the universal ribosomal protein uS11 family.</text>
</comment>
<keyword id="KW-0687">Ribonucleoprotein</keyword>
<keyword id="KW-0689">Ribosomal protein</keyword>
<keyword id="KW-0694">RNA-binding</keyword>
<keyword id="KW-0699">rRNA-binding</keyword>
<organism>
    <name type="scientific">Mycobacterium leprae (strain Br4923)</name>
    <dbReference type="NCBI Taxonomy" id="561304"/>
    <lineage>
        <taxon>Bacteria</taxon>
        <taxon>Bacillati</taxon>
        <taxon>Actinomycetota</taxon>
        <taxon>Actinomycetes</taxon>
        <taxon>Mycobacteriales</taxon>
        <taxon>Mycobacteriaceae</taxon>
        <taxon>Mycobacterium</taxon>
    </lineage>
</organism>
<protein>
    <recommendedName>
        <fullName evidence="1">Small ribosomal subunit protein uS11</fullName>
    </recommendedName>
    <alternativeName>
        <fullName evidence="3">30S ribosomal protein S11</fullName>
    </alternativeName>
</protein>
<evidence type="ECO:0000255" key="1">
    <source>
        <dbReference type="HAMAP-Rule" id="MF_01310"/>
    </source>
</evidence>
<evidence type="ECO:0000256" key="2">
    <source>
        <dbReference type="SAM" id="MobiDB-lite"/>
    </source>
</evidence>
<evidence type="ECO:0000305" key="3"/>
<accession>B8ZSH8</accession>
<gene>
    <name evidence="1" type="primary">rpsK</name>
    <name type="ordered locus">MLBr01959</name>
</gene>
<sequence>MPPKKANAAGPKKGQKTRKREKKNIPYGAAHIKSTFNNTIVTITDQQGNVIAWASSGHVGFKGSRKSTPFAAQLAAENAARKAQEHGVRKVDVFVMGPGSGRETAIRSLQAAGLEVGAISDVTPQPHNGCRPPKRRRV</sequence>
<reference key="1">
    <citation type="journal article" date="2009" name="Nat. Genet.">
        <title>Comparative genomic and phylogeographic analysis of Mycobacterium leprae.</title>
        <authorList>
            <person name="Monot M."/>
            <person name="Honore N."/>
            <person name="Garnier T."/>
            <person name="Zidane N."/>
            <person name="Sherafi D."/>
            <person name="Paniz-Mondolfi A."/>
            <person name="Matsuoka M."/>
            <person name="Taylor G.M."/>
            <person name="Donoghue H.D."/>
            <person name="Bouwman A."/>
            <person name="Mays S."/>
            <person name="Watson C."/>
            <person name="Lockwood D."/>
            <person name="Khamispour A."/>
            <person name="Dowlati Y."/>
            <person name="Jianping S."/>
            <person name="Rea T.H."/>
            <person name="Vera-Cabrera L."/>
            <person name="Stefani M.M."/>
            <person name="Banu S."/>
            <person name="Macdonald M."/>
            <person name="Sapkota B.R."/>
            <person name="Spencer J.S."/>
            <person name="Thomas J."/>
            <person name="Harshman K."/>
            <person name="Singh P."/>
            <person name="Busso P."/>
            <person name="Gattiker A."/>
            <person name="Rougemont J."/>
            <person name="Brennan P.J."/>
            <person name="Cole S.T."/>
        </authorList>
    </citation>
    <scope>NUCLEOTIDE SEQUENCE [LARGE SCALE GENOMIC DNA]</scope>
    <source>
        <strain>Br4923</strain>
    </source>
</reference>
<name>RS11_MYCLB</name>
<feature type="chain" id="PRO_1000165559" description="Small ribosomal subunit protein uS11">
    <location>
        <begin position="1"/>
        <end position="138"/>
    </location>
</feature>
<feature type="region of interest" description="Disordered" evidence="2">
    <location>
        <begin position="1"/>
        <end position="23"/>
    </location>
</feature>
<feature type="compositionally biased region" description="Low complexity" evidence="2">
    <location>
        <begin position="1"/>
        <end position="12"/>
    </location>
</feature>
<feature type="compositionally biased region" description="Basic residues" evidence="2">
    <location>
        <begin position="13"/>
        <end position="22"/>
    </location>
</feature>